<accession>Q75CZ0</accession>
<protein>
    <recommendedName>
        <fullName>Regulator of free ubiquitin chains 1</fullName>
    </recommendedName>
</protein>
<gene>
    <name type="primary">RFU1</name>
    <name type="ordered locus">ABR232C</name>
</gene>
<comment type="function">
    <text evidence="1">Inhibitor of the DOA4 deubiquitinase involved in the regulation of protein degradation by the proteasome and maintenance of a normal level of free ubiquitin.</text>
</comment>
<comment type="subcellular location">
    <subcellularLocation>
        <location evidence="1">Endosome</location>
    </subcellularLocation>
</comment>
<comment type="similarity">
    <text evidence="2">Belongs to the RFU1 family.</text>
</comment>
<evidence type="ECO:0000250" key="1"/>
<evidence type="ECO:0000305" key="2"/>
<dbReference type="EMBL" id="AE016815">
    <property type="protein sequence ID" value="AAS51005.2"/>
    <property type="molecule type" value="Genomic_DNA"/>
</dbReference>
<dbReference type="RefSeq" id="NP_983181.2">
    <property type="nucleotide sequence ID" value="NM_208534.2"/>
</dbReference>
<dbReference type="SMR" id="Q75CZ0"/>
<dbReference type="FunCoup" id="Q75CZ0">
    <property type="interactions" value="32"/>
</dbReference>
<dbReference type="STRING" id="284811.Q75CZ0"/>
<dbReference type="EnsemblFungi" id="AAS51005">
    <property type="protein sequence ID" value="AAS51005"/>
    <property type="gene ID" value="AGOS_ABR232C"/>
</dbReference>
<dbReference type="GeneID" id="4619291"/>
<dbReference type="KEGG" id="ago:AGOS_ABR232C"/>
<dbReference type="eggNOG" id="ENOG502S3ZX">
    <property type="taxonomic scope" value="Eukaryota"/>
</dbReference>
<dbReference type="HOGENOM" id="CLU_1348926_0_0_1"/>
<dbReference type="InParanoid" id="Q75CZ0"/>
<dbReference type="OMA" id="KSCHELS"/>
<dbReference type="OrthoDB" id="3640at2759"/>
<dbReference type="Proteomes" id="UP000000591">
    <property type="component" value="Chromosome II"/>
</dbReference>
<dbReference type="GO" id="GO:0005768">
    <property type="term" value="C:endosome"/>
    <property type="evidence" value="ECO:0007669"/>
    <property type="project" value="UniProtKB-SubCell"/>
</dbReference>
<dbReference type="GO" id="GO:0004869">
    <property type="term" value="F:cysteine-type endopeptidase inhibitor activity"/>
    <property type="evidence" value="ECO:0007669"/>
    <property type="project" value="UniProtKB-KW"/>
</dbReference>
<dbReference type="GO" id="GO:0010992">
    <property type="term" value="P:ubiquitin recycling"/>
    <property type="evidence" value="ECO:0007669"/>
    <property type="project" value="EnsemblFungi"/>
</dbReference>
<dbReference type="FunFam" id="1.20.58.80:FF:000055">
    <property type="entry name" value="Regulator of free ubiquitin chains 1"/>
    <property type="match status" value="1"/>
</dbReference>
<dbReference type="Gene3D" id="1.20.58.80">
    <property type="entry name" value="Phosphotransferase system, lactose/cellobiose-type IIA subunit"/>
    <property type="match status" value="1"/>
</dbReference>
<dbReference type="PANTHER" id="PTHR12947">
    <property type="entry name" value="AMSH-LIKE PROTEASE"/>
    <property type="match status" value="1"/>
</dbReference>
<dbReference type="PANTHER" id="PTHR12947:SF13">
    <property type="entry name" value="FI19924P1"/>
    <property type="match status" value="1"/>
</dbReference>
<organism>
    <name type="scientific">Eremothecium gossypii (strain ATCC 10895 / CBS 109.51 / FGSC 9923 / NRRL Y-1056)</name>
    <name type="common">Yeast</name>
    <name type="synonym">Ashbya gossypii</name>
    <dbReference type="NCBI Taxonomy" id="284811"/>
    <lineage>
        <taxon>Eukaryota</taxon>
        <taxon>Fungi</taxon>
        <taxon>Dikarya</taxon>
        <taxon>Ascomycota</taxon>
        <taxon>Saccharomycotina</taxon>
        <taxon>Saccharomycetes</taxon>
        <taxon>Saccharomycetales</taxon>
        <taxon>Saccharomycetaceae</taxon>
        <taxon>Eremothecium</taxon>
    </lineage>
</organism>
<feature type="chain" id="PRO_0000376812" description="Regulator of free ubiquitin chains 1">
    <location>
        <begin position="1"/>
        <end position="193"/>
    </location>
</feature>
<reference key="1">
    <citation type="journal article" date="2004" name="Science">
        <title>The Ashbya gossypii genome as a tool for mapping the ancient Saccharomyces cerevisiae genome.</title>
        <authorList>
            <person name="Dietrich F.S."/>
            <person name="Voegeli S."/>
            <person name="Brachat S."/>
            <person name="Lerch A."/>
            <person name="Gates K."/>
            <person name="Steiner S."/>
            <person name="Mohr C."/>
            <person name="Poehlmann R."/>
            <person name="Luedi P."/>
            <person name="Choi S."/>
            <person name="Wing R.A."/>
            <person name="Flavier A."/>
            <person name="Gaffney T.D."/>
            <person name="Philippsen P."/>
        </authorList>
    </citation>
    <scope>NUCLEOTIDE SEQUENCE [LARGE SCALE GENOMIC DNA]</scope>
    <source>
        <strain>ATCC 10895 / CBS 109.51 / FGSC 9923 / NRRL Y-1056</strain>
    </source>
</reference>
<reference key="2">
    <citation type="journal article" date="2013" name="G3 (Bethesda)">
        <title>Genomes of Ashbya fungi isolated from insects reveal four mating-type loci, numerous translocations, lack of transposons, and distinct gene duplications.</title>
        <authorList>
            <person name="Dietrich F.S."/>
            <person name="Voegeli S."/>
            <person name="Kuo S."/>
            <person name="Philippsen P."/>
        </authorList>
    </citation>
    <scope>GENOME REANNOTATION</scope>
    <scope>SEQUENCE REVISION TO 122; 148-149; 156-157 AND C-TERMINUS</scope>
    <source>
        <strain>ATCC 10895 / CBS 109.51 / FGSC 9923 / NRRL Y-1056</strain>
    </source>
</reference>
<proteinExistence type="inferred from homology"/>
<name>RFU1_EREGS</name>
<keyword id="KW-0967">Endosome</keyword>
<keyword id="KW-0646">Protease inhibitor</keyword>
<keyword id="KW-1185">Reference proteome</keyword>
<keyword id="KW-0789">Thiol protease inhibitor</keyword>
<sequence length="193" mass="21865">MKSSAQLCMEARNYNFNAAAPLRLYLATCVRLVEEAQAAAQADDVARAYMLYVRYLDLCMHQLSGHREVQQPVTDAERLSRDEYEQLLRLEVPAVLRLTEELKSAVDLRHERGRASLARSVVPEAGRGEHSRQEVQLPPSFDEERFNRTVQWFLAAGRSMSLPVSAEEPAVREVFSYPELPKLSMAAESWAPS</sequence>